<dbReference type="EC" id="4.1.99.17" evidence="1"/>
<dbReference type="EMBL" id="CP000153">
    <property type="protein sequence ID" value="ABB44763.1"/>
    <property type="molecule type" value="Genomic_DNA"/>
</dbReference>
<dbReference type="RefSeq" id="WP_011373115.1">
    <property type="nucleotide sequence ID" value="NC_007575.1"/>
</dbReference>
<dbReference type="SMR" id="Q30QG8"/>
<dbReference type="STRING" id="326298.Suden_1486"/>
<dbReference type="KEGG" id="tdn:Suden_1486"/>
<dbReference type="eggNOG" id="COG0422">
    <property type="taxonomic scope" value="Bacteria"/>
</dbReference>
<dbReference type="HOGENOM" id="CLU_013181_2_1_7"/>
<dbReference type="OrthoDB" id="9805897at2"/>
<dbReference type="UniPathway" id="UPA00060"/>
<dbReference type="Proteomes" id="UP000002714">
    <property type="component" value="Chromosome"/>
</dbReference>
<dbReference type="GO" id="GO:0005829">
    <property type="term" value="C:cytosol"/>
    <property type="evidence" value="ECO:0007669"/>
    <property type="project" value="TreeGrafter"/>
</dbReference>
<dbReference type="GO" id="GO:0051539">
    <property type="term" value="F:4 iron, 4 sulfur cluster binding"/>
    <property type="evidence" value="ECO:0007669"/>
    <property type="project" value="UniProtKB-KW"/>
</dbReference>
<dbReference type="GO" id="GO:0016830">
    <property type="term" value="F:carbon-carbon lyase activity"/>
    <property type="evidence" value="ECO:0007669"/>
    <property type="project" value="InterPro"/>
</dbReference>
<dbReference type="GO" id="GO:0008270">
    <property type="term" value="F:zinc ion binding"/>
    <property type="evidence" value="ECO:0007669"/>
    <property type="project" value="UniProtKB-UniRule"/>
</dbReference>
<dbReference type="GO" id="GO:0009228">
    <property type="term" value="P:thiamine biosynthetic process"/>
    <property type="evidence" value="ECO:0007669"/>
    <property type="project" value="UniProtKB-KW"/>
</dbReference>
<dbReference type="GO" id="GO:0009229">
    <property type="term" value="P:thiamine diphosphate biosynthetic process"/>
    <property type="evidence" value="ECO:0007669"/>
    <property type="project" value="UniProtKB-UniRule"/>
</dbReference>
<dbReference type="FunFam" id="3.20.20.540:FF:000001">
    <property type="entry name" value="Phosphomethylpyrimidine synthase"/>
    <property type="match status" value="1"/>
</dbReference>
<dbReference type="Gene3D" id="6.10.250.620">
    <property type="match status" value="1"/>
</dbReference>
<dbReference type="Gene3D" id="3.20.20.540">
    <property type="entry name" value="Radical SAM ThiC family, central domain"/>
    <property type="match status" value="1"/>
</dbReference>
<dbReference type="HAMAP" id="MF_00089">
    <property type="entry name" value="ThiC"/>
    <property type="match status" value="1"/>
</dbReference>
<dbReference type="InterPro" id="IPR037509">
    <property type="entry name" value="ThiC"/>
</dbReference>
<dbReference type="InterPro" id="IPR038521">
    <property type="entry name" value="ThiC/Bza_core_dom"/>
</dbReference>
<dbReference type="InterPro" id="IPR002817">
    <property type="entry name" value="ThiC/BzaA/B"/>
</dbReference>
<dbReference type="NCBIfam" id="NF006763">
    <property type="entry name" value="PRK09284.1"/>
    <property type="match status" value="1"/>
</dbReference>
<dbReference type="NCBIfam" id="NF009895">
    <property type="entry name" value="PRK13352.1"/>
    <property type="match status" value="1"/>
</dbReference>
<dbReference type="NCBIfam" id="TIGR00190">
    <property type="entry name" value="thiC"/>
    <property type="match status" value="1"/>
</dbReference>
<dbReference type="PANTHER" id="PTHR30557:SF1">
    <property type="entry name" value="PHOSPHOMETHYLPYRIMIDINE SYNTHASE, CHLOROPLASTIC"/>
    <property type="match status" value="1"/>
</dbReference>
<dbReference type="PANTHER" id="PTHR30557">
    <property type="entry name" value="THIAMINE BIOSYNTHESIS PROTEIN THIC"/>
    <property type="match status" value="1"/>
</dbReference>
<dbReference type="Pfam" id="PF01964">
    <property type="entry name" value="ThiC_Rad_SAM"/>
    <property type="match status" value="1"/>
</dbReference>
<dbReference type="SFLD" id="SFLDF00407">
    <property type="entry name" value="phosphomethylpyrimidine_syntha"/>
    <property type="match status" value="1"/>
</dbReference>
<dbReference type="SFLD" id="SFLDG01114">
    <property type="entry name" value="phosphomethylpyrimidine_syntha"/>
    <property type="match status" value="1"/>
</dbReference>
<dbReference type="SFLD" id="SFLDS00113">
    <property type="entry name" value="Radical_SAM_Phosphomethylpyrim"/>
    <property type="match status" value="1"/>
</dbReference>
<feature type="chain" id="PRO_0000242316" description="Phosphomethylpyrimidine synthase">
    <location>
        <begin position="1"/>
        <end position="460"/>
    </location>
</feature>
<feature type="binding site" evidence="1">
    <location>
        <position position="80"/>
    </location>
    <ligand>
        <name>substrate</name>
    </ligand>
</feature>
<feature type="binding site" evidence="1">
    <location>
        <position position="109"/>
    </location>
    <ligand>
        <name>substrate</name>
    </ligand>
</feature>
<feature type="binding site" evidence="1">
    <location>
        <position position="138"/>
    </location>
    <ligand>
        <name>substrate</name>
    </ligand>
</feature>
<feature type="binding site" evidence="1">
    <location>
        <position position="174"/>
    </location>
    <ligand>
        <name>substrate</name>
    </ligand>
</feature>
<feature type="binding site" evidence="1">
    <location>
        <begin position="194"/>
        <end position="196"/>
    </location>
    <ligand>
        <name>substrate</name>
    </ligand>
</feature>
<feature type="binding site" evidence="1">
    <location>
        <begin position="235"/>
        <end position="238"/>
    </location>
    <ligand>
        <name>substrate</name>
    </ligand>
</feature>
<feature type="binding site" evidence="1">
    <location>
        <position position="274"/>
    </location>
    <ligand>
        <name>substrate</name>
    </ligand>
</feature>
<feature type="binding site" evidence="1">
    <location>
        <position position="278"/>
    </location>
    <ligand>
        <name>Zn(2+)</name>
        <dbReference type="ChEBI" id="CHEBI:29105"/>
    </ligand>
</feature>
<feature type="binding site" evidence="1">
    <location>
        <position position="301"/>
    </location>
    <ligand>
        <name>substrate</name>
    </ligand>
</feature>
<feature type="binding site" evidence="1">
    <location>
        <position position="342"/>
    </location>
    <ligand>
        <name>Zn(2+)</name>
        <dbReference type="ChEBI" id="CHEBI:29105"/>
    </ligand>
</feature>
<feature type="binding site" evidence="1">
    <location>
        <position position="422"/>
    </location>
    <ligand>
        <name>[4Fe-4S] cluster</name>
        <dbReference type="ChEBI" id="CHEBI:49883"/>
        <note>4Fe-4S-S-AdoMet</note>
    </ligand>
</feature>
<feature type="binding site" evidence="1">
    <location>
        <position position="425"/>
    </location>
    <ligand>
        <name>[4Fe-4S] cluster</name>
        <dbReference type="ChEBI" id="CHEBI:49883"/>
        <note>4Fe-4S-S-AdoMet</note>
    </ligand>
</feature>
<feature type="binding site" evidence="1">
    <location>
        <position position="430"/>
    </location>
    <ligand>
        <name>[4Fe-4S] cluster</name>
        <dbReference type="ChEBI" id="CHEBI:49883"/>
        <note>4Fe-4S-S-AdoMet</note>
    </ligand>
</feature>
<evidence type="ECO:0000255" key="1">
    <source>
        <dbReference type="HAMAP-Rule" id="MF_00089"/>
    </source>
</evidence>
<organism>
    <name type="scientific">Sulfurimonas denitrificans (strain ATCC 33889 / DSM 1251)</name>
    <name type="common">Thiomicrospira denitrificans (strain ATCC 33889 / DSM 1251)</name>
    <dbReference type="NCBI Taxonomy" id="326298"/>
    <lineage>
        <taxon>Bacteria</taxon>
        <taxon>Pseudomonadati</taxon>
        <taxon>Campylobacterota</taxon>
        <taxon>Epsilonproteobacteria</taxon>
        <taxon>Campylobacterales</taxon>
        <taxon>Sulfurimonadaceae</taxon>
        <taxon>Sulfurimonas</taxon>
    </lineage>
</organism>
<proteinExistence type="inferred from homology"/>
<keyword id="KW-0004">4Fe-4S</keyword>
<keyword id="KW-0408">Iron</keyword>
<keyword id="KW-0411">Iron-sulfur</keyword>
<keyword id="KW-0456">Lyase</keyword>
<keyword id="KW-0479">Metal-binding</keyword>
<keyword id="KW-1185">Reference proteome</keyword>
<keyword id="KW-0949">S-adenosyl-L-methionine</keyword>
<keyword id="KW-0784">Thiamine biosynthesis</keyword>
<keyword id="KW-0862">Zinc</keyword>
<gene>
    <name evidence="1" type="primary">thiC</name>
    <name type="ordered locus">Suden_1486</name>
</gene>
<sequence>MRSLWVEKRKDDPVKTQMYYAKQGIITQEMEYVAKIEKLSPELIRSEIARGRLIIPANVNHTTLEPMAIGIAATCKINANIGSSAIASDVQGEVEKMQVSQHYKADTAMDLSTGGDLDEIRKAVIASSKIPIGTVPIYQILHDVGNKIEDLSIEVMLEVLERQAKQGVSYFTIHAGFLLETMPKIAKRKMGIVSRGGSLMAAWMMHYHRENPFYTAYDEILDICARYDVALSLGDSLRPGCLADASDDAQLGELKVLGELTLRAWEKNVQVMIEGPGHVPLNQIERNMKLQRELCHEAPFYILGPLVTDIAAGYDHISSAIGAAVGGWHGASMLCYVTPKEHLGLPNANDVREGIIAYKIAAHAADIARGRKGARDIDDEMSDARYRFDWNRQFELALDSERAREYHDETLPQDVFKEAEFCSMCGPKFCSYKITQSIMDNPEAIEQIAREVKEREALGA</sequence>
<accession>Q30QG8</accession>
<comment type="function">
    <text evidence="1">Catalyzes the synthesis of the hydroxymethylpyrimidine phosphate (HMP-P) moiety of thiamine from aminoimidazole ribotide (AIR) in a radical S-adenosyl-L-methionine (SAM)-dependent reaction.</text>
</comment>
<comment type="catalytic activity">
    <reaction evidence="1">
        <text>5-amino-1-(5-phospho-beta-D-ribosyl)imidazole + S-adenosyl-L-methionine = 4-amino-2-methyl-5-(phosphooxymethyl)pyrimidine + CO + 5'-deoxyadenosine + formate + L-methionine + 3 H(+)</text>
        <dbReference type="Rhea" id="RHEA:24840"/>
        <dbReference type="ChEBI" id="CHEBI:15378"/>
        <dbReference type="ChEBI" id="CHEBI:15740"/>
        <dbReference type="ChEBI" id="CHEBI:17245"/>
        <dbReference type="ChEBI" id="CHEBI:17319"/>
        <dbReference type="ChEBI" id="CHEBI:57844"/>
        <dbReference type="ChEBI" id="CHEBI:58354"/>
        <dbReference type="ChEBI" id="CHEBI:59789"/>
        <dbReference type="ChEBI" id="CHEBI:137981"/>
        <dbReference type="EC" id="4.1.99.17"/>
    </reaction>
</comment>
<comment type="cofactor">
    <cofactor evidence="1">
        <name>[4Fe-4S] cluster</name>
        <dbReference type="ChEBI" id="CHEBI:49883"/>
    </cofactor>
    <text evidence="1">Binds 1 [4Fe-4S] cluster per subunit. The cluster is coordinated with 3 cysteines and an exchangeable S-adenosyl-L-methionine.</text>
</comment>
<comment type="pathway">
    <text evidence="1">Cofactor biosynthesis; thiamine diphosphate biosynthesis.</text>
</comment>
<comment type="subunit">
    <text evidence="1">Homodimer.</text>
</comment>
<comment type="similarity">
    <text evidence="1">Belongs to the ThiC family.</text>
</comment>
<name>THIC_SULDN</name>
<reference key="1">
    <citation type="journal article" date="2008" name="Appl. Environ. Microbiol.">
        <title>Genome of the epsilonproteobacterial chemolithoautotroph Sulfurimonas denitrificans.</title>
        <authorList>
            <person name="Sievert S.M."/>
            <person name="Scott K.M."/>
            <person name="Klotz M.G."/>
            <person name="Chain P.S.G."/>
            <person name="Hauser L.J."/>
            <person name="Hemp J."/>
            <person name="Huegler M."/>
            <person name="Land M."/>
            <person name="Lapidus A."/>
            <person name="Larimer F.W."/>
            <person name="Lucas S."/>
            <person name="Malfatti S.A."/>
            <person name="Meyer F."/>
            <person name="Paulsen I.T."/>
            <person name="Ren Q."/>
            <person name="Simon J."/>
            <person name="Bailey K."/>
            <person name="Diaz E."/>
            <person name="Fitzpatrick K.A."/>
            <person name="Glover B."/>
            <person name="Gwatney N."/>
            <person name="Korajkic A."/>
            <person name="Long A."/>
            <person name="Mobberley J.M."/>
            <person name="Pantry S.N."/>
            <person name="Pazder G."/>
            <person name="Peterson S."/>
            <person name="Quintanilla J.D."/>
            <person name="Sprinkle R."/>
            <person name="Stephens J."/>
            <person name="Thomas P."/>
            <person name="Vaughn R."/>
            <person name="Weber M.J."/>
            <person name="Wooten L.L."/>
        </authorList>
    </citation>
    <scope>NUCLEOTIDE SEQUENCE [LARGE SCALE GENOMIC DNA]</scope>
    <source>
        <strain>ATCC 33889 / DSM 1251</strain>
    </source>
</reference>
<protein>
    <recommendedName>
        <fullName evidence="1">Phosphomethylpyrimidine synthase</fullName>
        <ecNumber evidence="1">4.1.99.17</ecNumber>
    </recommendedName>
    <alternativeName>
        <fullName evidence="1">Hydroxymethylpyrimidine phosphate synthase</fullName>
        <shortName evidence="1">HMP-P synthase</shortName>
        <shortName evidence="1">HMP-phosphate synthase</shortName>
        <shortName evidence="1">HMPP synthase</shortName>
    </alternativeName>
    <alternativeName>
        <fullName evidence="1">Thiamine biosynthesis protein ThiC</fullName>
    </alternativeName>
</protein>